<comment type="function">
    <text evidence="4">Functions in the biosynthesis of branched-chain amino acids. Catalyzes the dehydration of (2R,3R)-2,3-dihydroxy-3-methylpentanoate (2,3-dihydroxy-3-methylvalerate) into 2-oxo-3-methylpentanoate (2-oxo-3-methylvalerate) and of (2R)-2,3-dihydroxy-3-methylbutanoate (2,3-dihydroxyisovalerate) into 2-oxo-3-methylbutanoate (2-oxoisovalerate), the penultimate precursor to L-isoleucine and L-valine, respectively.</text>
</comment>
<comment type="catalytic activity">
    <reaction evidence="4">
        <text>(2R)-2,3-dihydroxy-3-methylbutanoate = 3-methyl-2-oxobutanoate + H2O</text>
        <dbReference type="Rhea" id="RHEA:24809"/>
        <dbReference type="ChEBI" id="CHEBI:11851"/>
        <dbReference type="ChEBI" id="CHEBI:15377"/>
        <dbReference type="ChEBI" id="CHEBI:49072"/>
        <dbReference type="EC" id="4.2.1.9"/>
    </reaction>
    <physiologicalReaction direction="left-to-right" evidence="10">
        <dbReference type="Rhea" id="RHEA:24810"/>
    </physiologicalReaction>
</comment>
<comment type="catalytic activity">
    <reaction evidence="1">
        <text>(2R,3R)-2,3-dihydroxy-3-methylpentanoate = (S)-3-methyl-2-oxopentanoate + H2O</text>
        <dbReference type="Rhea" id="RHEA:27694"/>
        <dbReference type="ChEBI" id="CHEBI:15377"/>
        <dbReference type="ChEBI" id="CHEBI:35146"/>
        <dbReference type="ChEBI" id="CHEBI:49258"/>
        <dbReference type="EC" id="4.2.1.9"/>
    </reaction>
    <physiologicalReaction direction="left-to-right" evidence="1">
        <dbReference type="Rhea" id="RHEA:27695"/>
    </physiologicalReaction>
</comment>
<comment type="cofactor">
    <cofactor evidence="4">
        <name>[2Fe-2S] cluster</name>
        <dbReference type="ChEBI" id="CHEBI:190135"/>
    </cofactor>
    <text evidence="4">Binds 1 [2Fe-2S] cluster per subunit.</text>
</comment>
<comment type="cofactor">
    <cofactor evidence="2">
        <name>Mg(2+)</name>
        <dbReference type="ChEBI" id="CHEBI:18420"/>
    </cofactor>
</comment>
<comment type="activity regulation">
    <text evidence="4">Is highly competitively inhibited by the fungal sesquiterpenoid aspterric acid, which is effective as a herbicide in spray applications.</text>
</comment>
<comment type="biophysicochemical properties">
    <kinetics>
        <KM evidence="4">5.7 mM for (2R)-2,3-dihydroxy-3-methylbutanoate</KM>
        <text evidence="4">kcat is 1.2 sec(-1) with (2R)-2,3-dihydroxy-3-methylbutanoate as substrate.</text>
    </kinetics>
</comment>
<comment type="pathway">
    <text evidence="9">Amino-acid biosynthesis; L-isoleucine biosynthesis; L-isoleucine from 2-oxobutanoate: step 3/4.</text>
</comment>
<comment type="pathway">
    <text evidence="9">Amino-acid biosynthesis; L-valine biosynthesis; L-valine from pyruvate: step 3/4.</text>
</comment>
<comment type="subcellular location">
    <subcellularLocation>
        <location evidence="3">Plastid</location>
        <location evidence="3">Chloroplast</location>
    </subcellularLocation>
</comment>
<comment type="alternative products">
    <event type="alternative splicing"/>
    <isoform>
        <id>Q9LIR4-1</id>
        <name>1</name>
        <sequence type="displayed"/>
    </isoform>
    <isoform>
        <id>Q9LIR4-2</id>
        <name>2</name>
        <sequence type="described" ref="VSP_056812"/>
    </isoform>
</comment>
<comment type="similarity">
    <text evidence="8">Belongs to the IlvD/Edd family.</text>
</comment>
<keyword id="KW-0001">2Fe-2S</keyword>
<keyword id="KW-0002">3D-structure</keyword>
<keyword id="KW-0007">Acetylation</keyword>
<keyword id="KW-0025">Alternative splicing</keyword>
<keyword id="KW-0028">Amino-acid biosynthesis</keyword>
<keyword id="KW-0100">Branched-chain amino acid biosynthesis</keyword>
<keyword id="KW-0150">Chloroplast</keyword>
<keyword id="KW-0408">Iron</keyword>
<keyword id="KW-0411">Iron-sulfur</keyword>
<keyword id="KW-0456">Lyase</keyword>
<keyword id="KW-0460">Magnesium</keyword>
<keyword id="KW-0479">Metal-binding</keyword>
<keyword id="KW-0934">Plastid</keyword>
<keyword id="KW-1185">Reference proteome</keyword>
<keyword id="KW-0809">Transit peptide</keyword>
<gene>
    <name evidence="8" type="primary">DHAD</name>
    <name evidence="11" type="ordered locus">At3g23940</name>
    <name evidence="5" type="ORF">F14O13.13</name>
</gene>
<name>ILVD_ARATH</name>
<protein>
    <recommendedName>
        <fullName evidence="7">Dihydroxy-acid dehydratase, chloroplastic</fullName>
        <shortName evidence="7">AthDHAD</shortName>
        <shortName>DAD</shortName>
        <ecNumber evidence="4">4.2.1.9</ecNumber>
    </recommendedName>
</protein>
<organism>
    <name type="scientific">Arabidopsis thaliana</name>
    <name type="common">Mouse-ear cress</name>
    <dbReference type="NCBI Taxonomy" id="3702"/>
    <lineage>
        <taxon>Eukaryota</taxon>
        <taxon>Viridiplantae</taxon>
        <taxon>Streptophyta</taxon>
        <taxon>Embryophyta</taxon>
        <taxon>Tracheophyta</taxon>
        <taxon>Spermatophyta</taxon>
        <taxon>Magnoliopsida</taxon>
        <taxon>eudicotyledons</taxon>
        <taxon>Gunneridae</taxon>
        <taxon>Pentapetalae</taxon>
        <taxon>rosids</taxon>
        <taxon>malvids</taxon>
        <taxon>Brassicales</taxon>
        <taxon>Brassicaceae</taxon>
        <taxon>Camelineae</taxon>
        <taxon>Arabidopsis</taxon>
    </lineage>
</organism>
<accession>Q9LIR4</accession>
<accession>F4J5B4</accession>
<accession>Q94BS6</accession>
<reference key="1">
    <citation type="journal article" date="2000" name="DNA Res.">
        <title>Structural analysis of Arabidopsis thaliana chromosome 3. II. Sequence features of the 4,251,695 bp regions covered by 90 P1, TAC and BAC clones.</title>
        <authorList>
            <person name="Kaneko T."/>
            <person name="Katoh T."/>
            <person name="Sato S."/>
            <person name="Nakamura Y."/>
            <person name="Asamizu E."/>
            <person name="Tabata S."/>
        </authorList>
    </citation>
    <scope>NUCLEOTIDE SEQUENCE [LARGE SCALE GENOMIC DNA]</scope>
    <source>
        <strain>cv. Columbia</strain>
    </source>
</reference>
<reference key="2">
    <citation type="journal article" date="2017" name="Plant J.">
        <title>Araport11: a complete reannotation of the Arabidopsis thaliana reference genome.</title>
        <authorList>
            <person name="Cheng C.Y."/>
            <person name="Krishnakumar V."/>
            <person name="Chan A.P."/>
            <person name="Thibaud-Nissen F."/>
            <person name="Schobel S."/>
            <person name="Town C.D."/>
        </authorList>
    </citation>
    <scope>GENOME REANNOTATION</scope>
    <source>
        <strain>cv. Columbia</strain>
    </source>
</reference>
<reference key="3">
    <citation type="journal article" date="2003" name="Science">
        <title>Empirical analysis of transcriptional activity in the Arabidopsis genome.</title>
        <authorList>
            <person name="Yamada K."/>
            <person name="Lim J."/>
            <person name="Dale J.M."/>
            <person name="Chen H."/>
            <person name="Shinn P."/>
            <person name="Palm C.J."/>
            <person name="Southwick A.M."/>
            <person name="Wu H.C."/>
            <person name="Kim C.J."/>
            <person name="Nguyen M."/>
            <person name="Pham P.K."/>
            <person name="Cheuk R.F."/>
            <person name="Karlin-Newmann G."/>
            <person name="Liu S.X."/>
            <person name="Lam B."/>
            <person name="Sakano H."/>
            <person name="Wu T."/>
            <person name="Yu G."/>
            <person name="Miranda M."/>
            <person name="Quach H.L."/>
            <person name="Tripp M."/>
            <person name="Chang C.H."/>
            <person name="Lee J.M."/>
            <person name="Toriumi M.J."/>
            <person name="Chan M.M."/>
            <person name="Tang C.C."/>
            <person name="Onodera C.S."/>
            <person name="Deng J.M."/>
            <person name="Akiyama K."/>
            <person name="Ansari Y."/>
            <person name="Arakawa T."/>
            <person name="Banh J."/>
            <person name="Banno F."/>
            <person name="Bowser L."/>
            <person name="Brooks S.Y."/>
            <person name="Carninci P."/>
            <person name="Chao Q."/>
            <person name="Choy N."/>
            <person name="Enju A."/>
            <person name="Goldsmith A.D."/>
            <person name="Gurjal M."/>
            <person name="Hansen N.F."/>
            <person name="Hayashizaki Y."/>
            <person name="Johnson-Hopson C."/>
            <person name="Hsuan V.W."/>
            <person name="Iida K."/>
            <person name="Karnes M."/>
            <person name="Khan S."/>
            <person name="Koesema E."/>
            <person name="Ishida J."/>
            <person name="Jiang P.X."/>
            <person name="Jones T."/>
            <person name="Kawai J."/>
            <person name="Kamiya A."/>
            <person name="Meyers C."/>
            <person name="Nakajima M."/>
            <person name="Narusaka M."/>
            <person name="Seki M."/>
            <person name="Sakurai T."/>
            <person name="Satou M."/>
            <person name="Tamse R."/>
            <person name="Vaysberg M."/>
            <person name="Wallender E.K."/>
            <person name="Wong C."/>
            <person name="Yamamura Y."/>
            <person name="Yuan S."/>
            <person name="Shinozaki K."/>
            <person name="Davis R.W."/>
            <person name="Theologis A."/>
            <person name="Ecker J.R."/>
        </authorList>
    </citation>
    <scope>NUCLEOTIDE SEQUENCE [LARGE SCALE MRNA] (ISOFORM 1)</scope>
    <source>
        <strain>cv. Columbia</strain>
    </source>
</reference>
<reference key="4">
    <citation type="journal article" date="1995" name="Plant Cell">
        <title>Biosynthesis of branched chain amino acids: from test tube to field.</title>
        <authorList>
            <person name="Singh B.K."/>
            <person name="Shaner D.L."/>
        </authorList>
    </citation>
    <scope>REVIEW</scope>
    <scope>PATHWAY</scope>
</reference>
<reference key="5">
    <citation type="journal article" date="2012" name="Mol. Cell. Proteomics">
        <title>Comparative large-scale characterisation of plant vs. mammal proteins reveals similar and idiosyncratic N-alpha acetylation features.</title>
        <authorList>
            <person name="Bienvenut W.V."/>
            <person name="Sumpton D."/>
            <person name="Martinez A."/>
            <person name="Lilla S."/>
            <person name="Espagne C."/>
            <person name="Meinnel T."/>
            <person name="Giglione C."/>
        </authorList>
    </citation>
    <scope>ACETYLATION [LARGE SCALE ANALYSIS] AT SER-35</scope>
    <scope>CLEAVAGE OF TRANSIT PEPTIDE [LARGE SCALE ANALYSIS] AFTER CYS-34</scope>
    <scope>IDENTIFICATION BY MASS SPECTROMETRY [LARGE SCALE ANALYSIS]</scope>
</reference>
<reference evidence="12" key="6">
    <citation type="submission" date="2017-10" db="PDB data bank">
        <title>The crystal structure of DHAD.</title>
        <authorList>
            <person name="Zang X."/>
            <person name="Huang W.X."/>
            <person name="Cheng R."/>
            <person name="Wu L."/>
            <person name="Zhou J.H."/>
        </authorList>
    </citation>
    <scope>X-RAY CRYSTALLOGRAPHY (1.84 ANGSTROMS)</scope>
</reference>
<reference evidence="13" key="7">
    <citation type="journal article" date="2018" name="Nature">
        <title>Resistance-gene-directed discovery of a natural-product herbicide with a new mode of action.</title>
        <authorList>
            <person name="Yan Y."/>
            <person name="Liu Q."/>
            <person name="Zang X."/>
            <person name="Yuan S."/>
            <person name="Bat-Erdene U."/>
            <person name="Nguyen C."/>
            <person name="Gan J."/>
            <person name="Zhou J."/>
            <person name="Jacobsen S.E."/>
            <person name="Tang Y."/>
        </authorList>
    </citation>
    <scope>X-RAY CRYSTALLOGRAPHY (2.11 ANGSTROMS) OF 36-608</scope>
    <scope>FUNCTION</scope>
    <scope>CATALYTIC ACTIVITY</scope>
    <scope>BIOPHYSICOCHEMICAL PROPERTIES</scope>
    <scope>ACTIVITY REGULATION</scope>
    <scope>COFACTOR</scope>
</reference>
<evidence type="ECO:0000250" key="1">
    <source>
        <dbReference type="UniProtKB" id="P05791"/>
    </source>
</evidence>
<evidence type="ECO:0000250" key="2">
    <source>
        <dbReference type="UniProtKB" id="P9WKJ5"/>
    </source>
</evidence>
<evidence type="ECO:0000255" key="3"/>
<evidence type="ECO:0000269" key="4">
    <source>
    </source>
</evidence>
<evidence type="ECO:0000303" key="5">
    <source>
    </source>
</evidence>
<evidence type="ECO:0000303" key="6">
    <source>
    </source>
</evidence>
<evidence type="ECO:0000303" key="7">
    <source>
    </source>
</evidence>
<evidence type="ECO:0000305" key="8"/>
<evidence type="ECO:0000305" key="9">
    <source>
    </source>
</evidence>
<evidence type="ECO:0000305" key="10">
    <source>
    </source>
</evidence>
<evidence type="ECO:0000312" key="11">
    <source>
        <dbReference type="Araport" id="AT3G23940"/>
    </source>
</evidence>
<evidence type="ECO:0007744" key="12">
    <source>
        <dbReference type="PDB" id="5YM0"/>
    </source>
</evidence>
<evidence type="ECO:0007744" key="13">
    <source>
        <dbReference type="PDB" id="5ZE4"/>
    </source>
</evidence>
<evidence type="ECO:0007744" key="14">
    <source>
    </source>
</evidence>
<evidence type="ECO:0007829" key="15">
    <source>
        <dbReference type="PDB" id="5YM0"/>
    </source>
</evidence>
<evidence type="ECO:0007829" key="16">
    <source>
        <dbReference type="PDB" id="5ZE4"/>
    </source>
</evidence>
<evidence type="ECO:0007829" key="17">
    <source>
        <dbReference type="PDB" id="8HS0"/>
    </source>
</evidence>
<evidence type="ECO:0007829" key="18">
    <source>
        <dbReference type="PDB" id="8IKZ"/>
    </source>
</evidence>
<dbReference type="EC" id="4.2.1.9" evidence="4"/>
<dbReference type="EMBL" id="AP001297">
    <property type="protein sequence ID" value="BAB03011.1"/>
    <property type="molecule type" value="Genomic_DNA"/>
</dbReference>
<dbReference type="EMBL" id="CP002686">
    <property type="protein sequence ID" value="AEE76834.1"/>
    <property type="molecule type" value="Genomic_DNA"/>
</dbReference>
<dbReference type="EMBL" id="CP002686">
    <property type="protein sequence ID" value="AEE76835.1"/>
    <property type="molecule type" value="Genomic_DNA"/>
</dbReference>
<dbReference type="EMBL" id="AF446360">
    <property type="protein sequence ID" value="AAL48233.1"/>
    <property type="molecule type" value="mRNA"/>
</dbReference>
<dbReference type="EMBL" id="BT000972">
    <property type="protein sequence ID" value="AAN41372.1"/>
    <property type="molecule type" value="mRNA"/>
</dbReference>
<dbReference type="EMBL" id="AY039921">
    <property type="protein sequence ID" value="AAK64025.1"/>
    <property type="molecule type" value="mRNA"/>
</dbReference>
<dbReference type="RefSeq" id="NP_001189959.1">
    <molecule id="Q9LIR4-2"/>
    <property type="nucleotide sequence ID" value="NM_001203030.1"/>
</dbReference>
<dbReference type="RefSeq" id="NP_189036.1">
    <molecule id="Q9LIR4-1"/>
    <property type="nucleotide sequence ID" value="NM_113299.5"/>
</dbReference>
<dbReference type="PDB" id="5YM0">
    <property type="method" value="X-ray"/>
    <property type="resolution" value="1.84 A"/>
    <property type="chains" value="A=1-608"/>
</dbReference>
<dbReference type="PDB" id="5ZE4">
    <property type="method" value="X-ray"/>
    <property type="resolution" value="2.11 A"/>
    <property type="chains" value="A=36-608"/>
</dbReference>
<dbReference type="PDB" id="8HS0">
    <property type="method" value="X-ray"/>
    <property type="resolution" value="1.42 A"/>
    <property type="chains" value="A=36-608"/>
</dbReference>
<dbReference type="PDB" id="8IKZ">
    <property type="method" value="X-ray"/>
    <property type="resolution" value="1.75 A"/>
    <property type="chains" value="A=36-608"/>
</dbReference>
<dbReference type="PDB" id="8IMU">
    <property type="method" value="X-ray"/>
    <property type="resolution" value="1.93 A"/>
    <property type="chains" value="A/B=36-608"/>
</dbReference>
<dbReference type="PDB" id="9JPI">
    <property type="method" value="X-ray"/>
    <property type="resolution" value="2.00 A"/>
    <property type="chains" value="A=30-608"/>
</dbReference>
<dbReference type="PDBsum" id="5YM0"/>
<dbReference type="PDBsum" id="5ZE4"/>
<dbReference type="PDBsum" id="8HS0"/>
<dbReference type="PDBsum" id="8IKZ"/>
<dbReference type="PDBsum" id="8IMU"/>
<dbReference type="PDBsum" id="9JPI"/>
<dbReference type="SMR" id="Q9LIR4"/>
<dbReference type="BioGRID" id="7309">
    <property type="interactions" value="22"/>
</dbReference>
<dbReference type="FunCoup" id="Q9LIR4">
    <property type="interactions" value="1098"/>
</dbReference>
<dbReference type="IntAct" id="Q9LIR4">
    <property type="interactions" value="1"/>
</dbReference>
<dbReference type="STRING" id="3702.Q9LIR4"/>
<dbReference type="GlyGen" id="Q9LIR4">
    <property type="glycosylation" value="1 site"/>
</dbReference>
<dbReference type="iPTMnet" id="Q9LIR4"/>
<dbReference type="MetOSite" id="Q9LIR4"/>
<dbReference type="SwissPalm" id="Q9LIR4"/>
<dbReference type="PaxDb" id="3702-AT3G23940.1"/>
<dbReference type="ProteomicsDB" id="248587">
    <molecule id="Q9LIR4-1"/>
</dbReference>
<dbReference type="EnsemblPlants" id="AT3G23940.1">
    <molecule id="Q9LIR4-1"/>
    <property type="protein sequence ID" value="AT3G23940.1"/>
    <property type="gene ID" value="AT3G23940"/>
</dbReference>
<dbReference type="EnsemblPlants" id="AT3G23940.2">
    <molecule id="Q9LIR4-2"/>
    <property type="protein sequence ID" value="AT3G23940.2"/>
    <property type="gene ID" value="AT3G23940"/>
</dbReference>
<dbReference type="GeneID" id="821977"/>
<dbReference type="Gramene" id="AT3G23940.1">
    <molecule id="Q9LIR4-1"/>
    <property type="protein sequence ID" value="AT3G23940.1"/>
    <property type="gene ID" value="AT3G23940"/>
</dbReference>
<dbReference type="Gramene" id="AT3G23940.2">
    <molecule id="Q9LIR4-2"/>
    <property type="protein sequence ID" value="AT3G23940.2"/>
    <property type="gene ID" value="AT3G23940"/>
</dbReference>
<dbReference type="KEGG" id="ath:AT3G23940"/>
<dbReference type="Araport" id="AT3G23940"/>
<dbReference type="TAIR" id="AT3G23940">
    <property type="gene designation" value="DHAD"/>
</dbReference>
<dbReference type="eggNOG" id="KOG2448">
    <property type="taxonomic scope" value="Eukaryota"/>
</dbReference>
<dbReference type="HOGENOM" id="CLU_014271_4_2_1"/>
<dbReference type="InParanoid" id="Q9LIR4"/>
<dbReference type="OMA" id="STQGRNM"/>
<dbReference type="OrthoDB" id="3851628at2759"/>
<dbReference type="PhylomeDB" id="Q9LIR4"/>
<dbReference type="BioCyc" id="ARA:AT3G23940-MONOMER"/>
<dbReference type="BRENDA" id="4.2.1.9">
    <property type="organism ID" value="399"/>
</dbReference>
<dbReference type="UniPathway" id="UPA00047">
    <property type="reaction ID" value="UER00057"/>
</dbReference>
<dbReference type="UniPathway" id="UPA00049">
    <property type="reaction ID" value="UER00061"/>
</dbReference>
<dbReference type="CD-CODE" id="4299E36E">
    <property type="entry name" value="Nucleolus"/>
</dbReference>
<dbReference type="PRO" id="PR:Q9LIR4"/>
<dbReference type="Proteomes" id="UP000006548">
    <property type="component" value="Chromosome 3"/>
</dbReference>
<dbReference type="ExpressionAtlas" id="Q9LIR4">
    <property type="expression patterns" value="baseline and differential"/>
</dbReference>
<dbReference type="GO" id="GO:0009507">
    <property type="term" value="C:chloroplast"/>
    <property type="evidence" value="ECO:0007005"/>
    <property type="project" value="TAIR"/>
</dbReference>
<dbReference type="GO" id="GO:0009570">
    <property type="term" value="C:chloroplast stroma"/>
    <property type="evidence" value="ECO:0007005"/>
    <property type="project" value="TAIR"/>
</dbReference>
<dbReference type="GO" id="GO:0009536">
    <property type="term" value="C:plastid"/>
    <property type="evidence" value="ECO:0007005"/>
    <property type="project" value="TAIR"/>
</dbReference>
<dbReference type="GO" id="GO:0051537">
    <property type="term" value="F:2 iron, 2 sulfur cluster binding"/>
    <property type="evidence" value="ECO:0007669"/>
    <property type="project" value="UniProtKB-KW"/>
</dbReference>
<dbReference type="GO" id="GO:0005507">
    <property type="term" value="F:copper ion binding"/>
    <property type="evidence" value="ECO:0007005"/>
    <property type="project" value="TAIR"/>
</dbReference>
<dbReference type="GO" id="GO:0004160">
    <property type="term" value="F:dihydroxy-acid dehydratase activity"/>
    <property type="evidence" value="ECO:0007669"/>
    <property type="project" value="UniProtKB-EC"/>
</dbReference>
<dbReference type="GO" id="GO:0016836">
    <property type="term" value="F:hydro-lyase activity"/>
    <property type="evidence" value="ECO:0000304"/>
    <property type="project" value="TAIR"/>
</dbReference>
<dbReference type="GO" id="GO:0009082">
    <property type="term" value="P:branched-chain amino acid biosynthetic process"/>
    <property type="evidence" value="ECO:0000315"/>
    <property type="project" value="TAIR"/>
</dbReference>
<dbReference type="GO" id="GO:0009553">
    <property type="term" value="P:embryo sac development"/>
    <property type="evidence" value="ECO:0000315"/>
    <property type="project" value="TAIR"/>
</dbReference>
<dbReference type="GO" id="GO:0009097">
    <property type="term" value="P:isoleucine biosynthetic process"/>
    <property type="evidence" value="ECO:0007669"/>
    <property type="project" value="UniProtKB-UniPathway"/>
</dbReference>
<dbReference type="GO" id="GO:0009099">
    <property type="term" value="P:L-valine biosynthetic process"/>
    <property type="evidence" value="ECO:0007669"/>
    <property type="project" value="UniProtKB-UniPathway"/>
</dbReference>
<dbReference type="GO" id="GO:0009555">
    <property type="term" value="P:pollen development"/>
    <property type="evidence" value="ECO:0000315"/>
    <property type="project" value="TAIR"/>
</dbReference>
<dbReference type="GO" id="GO:0009651">
    <property type="term" value="P:response to salt stress"/>
    <property type="evidence" value="ECO:0000315"/>
    <property type="project" value="TAIR"/>
</dbReference>
<dbReference type="GO" id="GO:0048364">
    <property type="term" value="P:root development"/>
    <property type="evidence" value="ECO:0000315"/>
    <property type="project" value="TAIR"/>
</dbReference>
<dbReference type="FunFam" id="3.50.30.80:FF:000001">
    <property type="entry name" value="Dihydroxy-acid dehydratase"/>
    <property type="match status" value="1"/>
</dbReference>
<dbReference type="Gene3D" id="3.50.30.80">
    <property type="entry name" value="IlvD/EDD C-terminal domain-like"/>
    <property type="match status" value="1"/>
</dbReference>
<dbReference type="HAMAP" id="MF_00012">
    <property type="entry name" value="IlvD"/>
    <property type="match status" value="1"/>
</dbReference>
<dbReference type="InterPro" id="IPR050165">
    <property type="entry name" value="DHAD_IlvD/Edd"/>
</dbReference>
<dbReference type="InterPro" id="IPR042096">
    <property type="entry name" value="Dihydro-acid_dehy_C"/>
</dbReference>
<dbReference type="InterPro" id="IPR004404">
    <property type="entry name" value="DihydroxyA_deHydtase"/>
</dbReference>
<dbReference type="InterPro" id="IPR020558">
    <property type="entry name" value="DiOHA_6PGluconate_deHydtase_CS"/>
</dbReference>
<dbReference type="InterPro" id="IPR056740">
    <property type="entry name" value="ILV_EDD_C"/>
</dbReference>
<dbReference type="InterPro" id="IPR000581">
    <property type="entry name" value="ILV_EDD_N"/>
</dbReference>
<dbReference type="InterPro" id="IPR037237">
    <property type="entry name" value="IlvD/EDD_N"/>
</dbReference>
<dbReference type="NCBIfam" id="TIGR00110">
    <property type="entry name" value="ilvD"/>
    <property type="match status" value="1"/>
</dbReference>
<dbReference type="NCBIfam" id="NF002068">
    <property type="entry name" value="PRK00911.1"/>
    <property type="match status" value="1"/>
</dbReference>
<dbReference type="PANTHER" id="PTHR21000">
    <property type="entry name" value="DIHYDROXY-ACID DEHYDRATASE DAD"/>
    <property type="match status" value="1"/>
</dbReference>
<dbReference type="PANTHER" id="PTHR21000:SF5">
    <property type="entry name" value="DIHYDROXY-ACID DEHYDRATASE, MITOCHONDRIAL"/>
    <property type="match status" value="1"/>
</dbReference>
<dbReference type="Pfam" id="PF24877">
    <property type="entry name" value="ILV_EDD_C"/>
    <property type="match status" value="1"/>
</dbReference>
<dbReference type="Pfam" id="PF00920">
    <property type="entry name" value="ILVD_EDD_N"/>
    <property type="match status" value="1"/>
</dbReference>
<dbReference type="SUPFAM" id="SSF143975">
    <property type="entry name" value="IlvD/EDD N-terminal domain-like"/>
    <property type="match status" value="1"/>
</dbReference>
<dbReference type="SUPFAM" id="SSF52016">
    <property type="entry name" value="LeuD/IlvD-like"/>
    <property type="match status" value="1"/>
</dbReference>
<dbReference type="PROSITE" id="PS00886">
    <property type="entry name" value="ILVD_EDD_1"/>
    <property type="match status" value="1"/>
</dbReference>
<dbReference type="PROSITE" id="PS00887">
    <property type="entry name" value="ILVD_EDD_2"/>
    <property type="match status" value="1"/>
</dbReference>
<sequence length="608" mass="64914">MQATIFSPRATLFPCKPLLPSHNVNSRRPSIISCSAQSVTADPSPPITDTNKLNKYSSRITEPKSQGGSQAILHGVGLSDDDLLKPQIGISSVWYEGNTCNMHLLKLSEAVKEGVENAGMVGFRFNTIGVSDAISMGTRGMCFSLQSRDLIADSIETVMSAQWYDGNISIPGCDKNMPGTIMAMGRLNRPGIMVYGGTIKPGHFQDKTYDIVSAFQSYGEFVSGSISDEQRKTVLHHSCPGAGACGGMYTANTMASAIEAMGMSLPYSSSIPAEDPLKLDECRLAGKYLLELLKMDLKPRDIITPKSLRNAMVSVMALGGSTNAVLHLIAIARSVGLELTLDDFQKVSDAVPFLADLKPSGKYVMEDIHKIGGTPAVLRYLLELGLMDGDCMTVTGQTLAQNLENVPSLTEGQEIIRPLSNPIKETGHIQILRGDLAPDGSVAKITGKEGLYFSGPALVFEGEESMLAAISADPMSFKGTVVVIRGEGPKGGPGMPEMLTPTSAIMGAGLGKECALLTDGRFSGGSHGFVVGHICPEAQEGGPIGLIKNGDIITIDIGKKRIDTQVSPEEMNDRRKKWTAPAYKVNRGVLYKYIKNVQSASDGCVTDE</sequence>
<proteinExistence type="evidence at protein level"/>
<feature type="transit peptide" description="Chloroplast" evidence="14">
    <location>
        <begin position="1"/>
        <end position="34"/>
    </location>
</feature>
<feature type="chain" id="PRO_0000430600" description="Dihydroxy-acid dehydratase, chloroplastic">
    <location>
        <begin position="35"/>
        <end position="608"/>
    </location>
</feature>
<feature type="active site" description="Proton acceptor" evidence="2">
    <location>
        <position position="523"/>
    </location>
</feature>
<feature type="binding site" evidence="4 13">
    <location>
        <position position="100"/>
    </location>
    <ligand>
        <name>[2Fe-2S] cluster</name>
        <dbReference type="ChEBI" id="CHEBI:190135"/>
    </ligand>
</feature>
<feature type="binding site" evidence="2">
    <location>
        <position position="132"/>
    </location>
    <ligand>
        <name>Mg(2+)</name>
        <dbReference type="ChEBI" id="CHEBI:18420"/>
    </ligand>
</feature>
<feature type="binding site" evidence="4 13">
    <location>
        <position position="173"/>
    </location>
    <ligand>
        <name>[2Fe-2S] cluster</name>
        <dbReference type="ChEBI" id="CHEBI:190135"/>
    </ligand>
</feature>
<feature type="binding site" evidence="4 13">
    <location>
        <position position="174"/>
    </location>
    <ligand>
        <name>Mg(2+)</name>
        <dbReference type="ChEBI" id="CHEBI:18420"/>
    </ligand>
</feature>
<feature type="binding site" evidence="4 13">
    <location>
        <position position="245"/>
    </location>
    <ligand>
        <name>[2Fe-2S] cluster</name>
        <dbReference type="ChEBI" id="CHEBI:190135"/>
    </ligand>
</feature>
<feature type="binding site" evidence="4 13">
    <location>
        <position position="497"/>
    </location>
    <ligand>
        <name>Mg(2+)</name>
        <dbReference type="ChEBI" id="CHEBI:18420"/>
    </ligand>
</feature>
<feature type="modified residue" description="N-acetylserine" evidence="14">
    <location>
        <position position="35"/>
    </location>
</feature>
<feature type="splice variant" id="VSP_056812" description="In isoform 2." evidence="6">
    <location>
        <begin position="393"/>
        <end position="394"/>
    </location>
</feature>
<feature type="sequence conflict" description="In Ref. 3; AAK64025." evidence="8" ref="3">
    <original>E</original>
    <variation>G</variation>
    <location>
        <position position="259"/>
    </location>
</feature>
<feature type="turn" evidence="17">
    <location>
        <begin position="55"/>
        <end position="57"/>
    </location>
</feature>
<feature type="helix" evidence="17">
    <location>
        <begin position="58"/>
        <end position="61"/>
    </location>
</feature>
<feature type="helix" evidence="17">
    <location>
        <begin position="64"/>
        <end position="66"/>
    </location>
</feature>
<feature type="helix" evidence="17">
    <location>
        <begin position="67"/>
        <end position="75"/>
    </location>
</feature>
<feature type="helix" evidence="17">
    <location>
        <begin position="82"/>
        <end position="84"/>
    </location>
</feature>
<feature type="strand" evidence="17">
    <location>
        <begin position="87"/>
        <end position="92"/>
    </location>
</feature>
<feature type="turn" evidence="17">
    <location>
        <begin position="99"/>
        <end position="103"/>
    </location>
</feature>
<feature type="helix" evidence="17">
    <location>
        <begin position="104"/>
        <end position="117"/>
    </location>
</feature>
<feature type="strand" evidence="17">
    <location>
        <begin position="120"/>
        <end position="126"/>
    </location>
</feature>
<feature type="helix" evidence="17">
    <location>
        <begin position="132"/>
        <end position="135"/>
    </location>
</feature>
<feature type="helix" evidence="17">
    <location>
        <begin position="139"/>
        <end position="143"/>
    </location>
</feature>
<feature type="helix" evidence="17">
    <location>
        <begin position="144"/>
        <end position="162"/>
    </location>
</feature>
<feature type="strand" evidence="17">
    <location>
        <begin position="165"/>
        <end position="170"/>
    </location>
</feature>
<feature type="strand" evidence="15">
    <location>
        <begin position="173"/>
        <end position="175"/>
    </location>
</feature>
<feature type="helix" evidence="17">
    <location>
        <begin position="176"/>
        <end position="187"/>
    </location>
</feature>
<feature type="strand" evidence="17">
    <location>
        <begin position="191"/>
        <end position="193"/>
    </location>
</feature>
<feature type="strand" evidence="17">
    <location>
        <begin position="202"/>
        <end position="204"/>
    </location>
</feature>
<feature type="strand" evidence="17">
    <location>
        <begin position="207"/>
        <end position="209"/>
    </location>
</feature>
<feature type="helix" evidence="17">
    <location>
        <begin position="211"/>
        <end position="222"/>
    </location>
</feature>
<feature type="helix" evidence="17">
    <location>
        <begin position="228"/>
        <end position="237"/>
    </location>
</feature>
<feature type="strand" evidence="17">
    <location>
        <begin position="241"/>
        <end position="244"/>
    </location>
</feature>
<feature type="strand" evidence="17">
    <location>
        <begin position="246"/>
        <end position="249"/>
    </location>
</feature>
<feature type="helix" evidence="17">
    <location>
        <begin position="250"/>
        <end position="260"/>
    </location>
</feature>
<feature type="turn" evidence="17">
    <location>
        <begin position="266"/>
        <end position="270"/>
    </location>
</feature>
<feature type="helix" evidence="17">
    <location>
        <begin position="276"/>
        <end position="295"/>
    </location>
</feature>
<feature type="helix" evidence="17">
    <location>
        <begin position="299"/>
        <end position="302"/>
    </location>
</feature>
<feature type="helix" evidence="17">
    <location>
        <begin position="305"/>
        <end position="318"/>
    </location>
</feature>
<feature type="helix" evidence="17">
    <location>
        <begin position="323"/>
        <end position="334"/>
    </location>
</feature>
<feature type="helix" evidence="17">
    <location>
        <begin position="341"/>
        <end position="350"/>
    </location>
</feature>
<feature type="turn" evidence="17">
    <location>
        <begin position="358"/>
        <end position="360"/>
    </location>
</feature>
<feature type="strand" evidence="17">
    <location>
        <begin position="361"/>
        <end position="363"/>
    </location>
</feature>
<feature type="helix" evidence="17">
    <location>
        <begin position="365"/>
        <end position="370"/>
    </location>
</feature>
<feature type="helix" evidence="17">
    <location>
        <begin position="373"/>
        <end position="383"/>
    </location>
</feature>
<feature type="strand" evidence="17">
    <location>
        <begin position="396"/>
        <end position="398"/>
    </location>
</feature>
<feature type="helix" evidence="17">
    <location>
        <begin position="399"/>
        <end position="404"/>
    </location>
</feature>
<feature type="strand" evidence="18">
    <location>
        <begin position="414"/>
        <end position="416"/>
    </location>
</feature>
<feature type="strand" evidence="17">
    <location>
        <begin position="423"/>
        <end position="426"/>
    </location>
</feature>
<feature type="strand" evidence="17">
    <location>
        <begin position="428"/>
        <end position="431"/>
    </location>
</feature>
<feature type="strand" evidence="16">
    <location>
        <begin position="433"/>
        <end position="436"/>
    </location>
</feature>
<feature type="strand" evidence="17">
    <location>
        <begin position="442"/>
        <end position="444"/>
    </location>
</feature>
<feature type="strand" evidence="18">
    <location>
        <begin position="447"/>
        <end position="449"/>
    </location>
</feature>
<feature type="strand" evidence="17">
    <location>
        <begin position="451"/>
        <end position="462"/>
    </location>
</feature>
<feature type="helix" evidence="17">
    <location>
        <begin position="463"/>
        <end position="472"/>
    </location>
</feature>
<feature type="helix" evidence="17">
    <location>
        <begin position="474"/>
        <end position="477"/>
    </location>
</feature>
<feature type="strand" evidence="17">
    <location>
        <begin position="481"/>
        <end position="484"/>
    </location>
</feature>
<feature type="turn" evidence="17">
    <location>
        <begin position="489"/>
        <end position="493"/>
    </location>
</feature>
<feature type="helix" evidence="17">
    <location>
        <begin position="500"/>
        <end position="507"/>
    </location>
</feature>
<feature type="turn" evidence="17">
    <location>
        <begin position="511"/>
        <end position="513"/>
    </location>
</feature>
<feature type="strand" evidence="17">
    <location>
        <begin position="515"/>
        <end position="524"/>
    </location>
</feature>
<feature type="strand" evidence="17">
    <location>
        <begin position="530"/>
        <end position="532"/>
    </location>
</feature>
<feature type="helix" evidence="17">
    <location>
        <begin position="538"/>
        <end position="540"/>
    </location>
</feature>
<feature type="helix" evidence="17">
    <location>
        <begin position="543"/>
        <end position="546"/>
    </location>
</feature>
<feature type="strand" evidence="17">
    <location>
        <begin position="552"/>
        <end position="556"/>
    </location>
</feature>
<feature type="turn" evidence="17">
    <location>
        <begin position="557"/>
        <end position="560"/>
    </location>
</feature>
<feature type="strand" evidence="17">
    <location>
        <begin position="561"/>
        <end position="566"/>
    </location>
</feature>
<feature type="helix" evidence="17">
    <location>
        <begin position="568"/>
        <end position="576"/>
    </location>
</feature>
<feature type="helix" evidence="17">
    <location>
        <begin position="588"/>
        <end position="596"/>
    </location>
</feature>
<feature type="helix" evidence="17">
    <location>
        <begin position="600"/>
        <end position="602"/>
    </location>
</feature>